<sequence length="733" mass="82258">MEGFDDAGVFFSDNFGGDNQQDAQINLQAVKKKYKEFIRTFNEENFFYKYRDTLKRNYLNGRYFLEIEMEDLVGFDETLADKLNKQPTEHLEIFEEAAREVADEITAPRPEHEEHMHDIQILLSSNANPTNIRQLKSDCVSKLVKIAGIIVAASGISAKATRMSIQCLSCSTVIPNLKVNPGLEGYALPRKCNTEQAGRPKCPLDPFFIMPDKCKCVDFQTLKLQELPDFVPQGEIPRHLQLFCDRSLCERVVPGNRVLIQGIYSIRKVGKPSRRDGREKAVVGVRAPYMRVVGITVDSEGAGAISRYSNITSDEEEHFRRMAASGDIYERLSQSLAPSIFGSRDIKKAITCMLFGGSRKRLPDGLCRRGDINVLLLGDPGTAKSQLLKFVEKVAPIAVYTSGKGSSAAGLTASVMKDPQTRNFVMEGGAMVLADGGVVCIDEFDKMREDDRVAIHEAMEQQTISIAKAGITTTLNSRCSVLAAANSIFGRWDDTKGEENIDFMPTILSRFDMIFIVKDIHDESRDITLAKHIINVHLSSNKSAPSEPAEGEISLSTFKKYIHYCRTHCGPRLSEAAGEKLKSRYVLMRSGAGQQEKASDKRLSIPITVRQLEAVIRISESLAKIRLQPFATDEHVNEALRLFQVSTLDAAMTGSLAGAEGFTTEEDQETLNRIEKQLKRRFAIGSQVSEQNILQDFLRQKYEERTVMKVIHTMIRRGELQHRMQRKMLYRIC</sequence>
<protein>
    <recommendedName>
        <fullName>DNA replication licensing factor Mcm5</fullName>
        <ecNumber>3.6.4.12</ecNumber>
    </recommendedName>
    <alternativeName>
        <fullName>Minichromosome maintenance 5 protein</fullName>
        <shortName>DmMCM5</shortName>
    </alternativeName>
</protein>
<dbReference type="EC" id="3.6.4.12"/>
<dbReference type="EMBL" id="U83493">
    <property type="protein sequence ID" value="AAC47652.1"/>
    <property type="status" value="ALT_FRAME"/>
    <property type="molecule type" value="mRNA"/>
</dbReference>
<dbReference type="EMBL" id="AE014297">
    <property type="protein sequence ID" value="AAF54557.1"/>
    <property type="molecule type" value="Genomic_DNA"/>
</dbReference>
<dbReference type="EMBL" id="AY071628">
    <property type="protein sequence ID" value="AAL49250.1"/>
    <property type="molecule type" value="mRNA"/>
</dbReference>
<dbReference type="RefSeq" id="NP_524308.2">
    <property type="nucleotide sequence ID" value="NM_079584.4"/>
</dbReference>
<dbReference type="PDB" id="6RAW">
    <property type="method" value="EM"/>
    <property type="resolution" value="3.70 A"/>
    <property type="chains" value="5=1-733"/>
</dbReference>
<dbReference type="PDB" id="6RAX">
    <property type="method" value="EM"/>
    <property type="resolution" value="3.99 A"/>
    <property type="chains" value="5=1-733"/>
</dbReference>
<dbReference type="PDB" id="6RAY">
    <property type="method" value="EM"/>
    <property type="resolution" value="4.28 A"/>
    <property type="chains" value="5=1-733"/>
</dbReference>
<dbReference type="PDB" id="6RAZ">
    <property type="method" value="EM"/>
    <property type="resolution" value="4.46 A"/>
    <property type="chains" value="5=1-733"/>
</dbReference>
<dbReference type="PDBsum" id="6RAW"/>
<dbReference type="PDBsum" id="6RAX"/>
<dbReference type="PDBsum" id="6RAY"/>
<dbReference type="PDBsum" id="6RAZ"/>
<dbReference type="EMDB" id="EMD-2772"/>
<dbReference type="EMDB" id="EMD-3318"/>
<dbReference type="EMDB" id="EMD-3319"/>
<dbReference type="EMDB" id="EMD-3320"/>
<dbReference type="EMDB" id="EMD-3321"/>
<dbReference type="EMDB" id="EMD-4785"/>
<dbReference type="EMDB" id="EMD-4786"/>
<dbReference type="EMDB" id="EMD-4787"/>
<dbReference type="EMDB" id="EMD-4788"/>
<dbReference type="SMR" id="Q9VGW6"/>
<dbReference type="BioGRID" id="66440">
    <property type="interactions" value="22"/>
</dbReference>
<dbReference type="ComplexPortal" id="CPX-2942">
    <property type="entry name" value="MCM complex"/>
</dbReference>
<dbReference type="FunCoup" id="Q9VGW6">
    <property type="interactions" value="1387"/>
</dbReference>
<dbReference type="IntAct" id="Q9VGW6">
    <property type="interactions" value="20"/>
</dbReference>
<dbReference type="STRING" id="7227.FBpp0081756"/>
<dbReference type="PaxDb" id="7227-FBpp0081756"/>
<dbReference type="EnsemblMetazoa" id="FBtr0082279">
    <property type="protein sequence ID" value="FBpp0081756"/>
    <property type="gene ID" value="FBgn0017577"/>
</dbReference>
<dbReference type="GeneID" id="41296"/>
<dbReference type="KEGG" id="dme:Dmel_CG4082"/>
<dbReference type="UCSC" id="CG4082-RA">
    <property type="organism name" value="d. melanogaster"/>
</dbReference>
<dbReference type="AGR" id="FB:FBgn0017577"/>
<dbReference type="CTD" id="4174"/>
<dbReference type="FlyBase" id="FBgn0017577">
    <property type="gene designation" value="Mcm5"/>
</dbReference>
<dbReference type="VEuPathDB" id="VectorBase:FBgn0017577"/>
<dbReference type="eggNOG" id="KOG0481">
    <property type="taxonomic scope" value="Eukaryota"/>
</dbReference>
<dbReference type="GeneTree" id="ENSGT01050000244824"/>
<dbReference type="HOGENOM" id="CLU_000995_7_2_1"/>
<dbReference type="InParanoid" id="Q9VGW6"/>
<dbReference type="OMA" id="ITYCKTR"/>
<dbReference type="OrthoDB" id="10036721at2759"/>
<dbReference type="PhylomeDB" id="Q9VGW6"/>
<dbReference type="Reactome" id="R-DME-176187">
    <property type="pathway name" value="Activation of ATR in response to replication stress"/>
</dbReference>
<dbReference type="Reactome" id="R-DME-68867">
    <property type="pathway name" value="Assembly of the pre-replicative complex"/>
</dbReference>
<dbReference type="Reactome" id="R-DME-68949">
    <property type="pathway name" value="Orc1 removal from chromatin"/>
</dbReference>
<dbReference type="Reactome" id="R-DME-68962">
    <property type="pathway name" value="Activation of the pre-replicative complex"/>
</dbReference>
<dbReference type="Reactome" id="R-DME-69052">
    <property type="pathway name" value="Switching of origins to a post-replicative state"/>
</dbReference>
<dbReference type="SignaLink" id="Q9VGW6"/>
<dbReference type="BioGRID-ORCS" id="41296">
    <property type="hits" value="0 hits in 1 CRISPR screen"/>
</dbReference>
<dbReference type="GenomeRNAi" id="41296"/>
<dbReference type="PRO" id="PR:Q9VGW6"/>
<dbReference type="Proteomes" id="UP000000803">
    <property type="component" value="Chromosome 3R"/>
</dbReference>
<dbReference type="Bgee" id="FBgn0017577">
    <property type="expression patterns" value="Expressed in secondary oocyte and 52 other cell types or tissues"/>
</dbReference>
<dbReference type="GO" id="GO:0071162">
    <property type="term" value="C:CMG complex"/>
    <property type="evidence" value="ECO:0000314"/>
    <property type="project" value="FlyBase"/>
</dbReference>
<dbReference type="GO" id="GO:0005829">
    <property type="term" value="C:cytosol"/>
    <property type="evidence" value="ECO:0007669"/>
    <property type="project" value="UniProtKB-SubCell"/>
</dbReference>
<dbReference type="GO" id="GO:0042555">
    <property type="term" value="C:MCM complex"/>
    <property type="evidence" value="ECO:0000314"/>
    <property type="project" value="FlyBase"/>
</dbReference>
<dbReference type="GO" id="GO:0005634">
    <property type="term" value="C:nucleus"/>
    <property type="evidence" value="ECO:0000318"/>
    <property type="project" value="GO_Central"/>
</dbReference>
<dbReference type="GO" id="GO:0005524">
    <property type="term" value="F:ATP binding"/>
    <property type="evidence" value="ECO:0007669"/>
    <property type="project" value="UniProtKB-KW"/>
</dbReference>
<dbReference type="GO" id="GO:0016887">
    <property type="term" value="F:ATP hydrolysis activity"/>
    <property type="evidence" value="ECO:0007669"/>
    <property type="project" value="RHEA"/>
</dbReference>
<dbReference type="GO" id="GO:0003688">
    <property type="term" value="F:DNA replication origin binding"/>
    <property type="evidence" value="ECO:0007669"/>
    <property type="project" value="InterPro"/>
</dbReference>
<dbReference type="GO" id="GO:0004386">
    <property type="term" value="F:helicase activity"/>
    <property type="evidence" value="ECO:0007669"/>
    <property type="project" value="UniProtKB-KW"/>
</dbReference>
<dbReference type="GO" id="GO:0003697">
    <property type="term" value="F:single-stranded DNA binding"/>
    <property type="evidence" value="ECO:0000318"/>
    <property type="project" value="GO_Central"/>
</dbReference>
<dbReference type="GO" id="GO:0030261">
    <property type="term" value="P:chromosome condensation"/>
    <property type="evidence" value="ECO:0000315"/>
    <property type="project" value="FlyBase"/>
</dbReference>
<dbReference type="GO" id="GO:0042023">
    <property type="term" value="P:DNA endoreduplication"/>
    <property type="evidence" value="ECO:0000315"/>
    <property type="project" value="FlyBase"/>
</dbReference>
<dbReference type="GO" id="GO:0006270">
    <property type="term" value="P:DNA replication initiation"/>
    <property type="evidence" value="ECO:0000318"/>
    <property type="project" value="GO_Central"/>
</dbReference>
<dbReference type="GO" id="GO:0000727">
    <property type="term" value="P:double-strand break repair via break-induced replication"/>
    <property type="evidence" value="ECO:0000318"/>
    <property type="project" value="GO_Central"/>
</dbReference>
<dbReference type="GO" id="GO:0051321">
    <property type="term" value="P:meiotic cell cycle"/>
    <property type="evidence" value="ECO:0000315"/>
    <property type="project" value="FlyBase"/>
</dbReference>
<dbReference type="GO" id="GO:0006279">
    <property type="term" value="P:premeiotic DNA replication"/>
    <property type="evidence" value="ECO:0000303"/>
    <property type="project" value="ComplexPortal"/>
</dbReference>
<dbReference type="GO" id="GO:0000712">
    <property type="term" value="P:resolution of meiotic recombination intermediates"/>
    <property type="evidence" value="ECO:0000315"/>
    <property type="project" value="FlyBase"/>
</dbReference>
<dbReference type="CDD" id="cd17756">
    <property type="entry name" value="MCM5"/>
    <property type="match status" value="1"/>
</dbReference>
<dbReference type="FunFam" id="2.20.28.10:FF:000005">
    <property type="entry name" value="DNA helicase"/>
    <property type="match status" value="1"/>
</dbReference>
<dbReference type="FunFam" id="3.30.1640.10:FF:000006">
    <property type="entry name" value="DNA helicase"/>
    <property type="match status" value="1"/>
</dbReference>
<dbReference type="FunFam" id="3.40.50.300:FF:000241">
    <property type="entry name" value="DNA helicase"/>
    <property type="match status" value="1"/>
</dbReference>
<dbReference type="Gene3D" id="2.20.28.10">
    <property type="match status" value="1"/>
</dbReference>
<dbReference type="Gene3D" id="3.30.1640.10">
    <property type="entry name" value="mini-chromosome maintenance (MCM) complex, chain A, domain 1"/>
    <property type="match status" value="1"/>
</dbReference>
<dbReference type="Gene3D" id="2.40.50.140">
    <property type="entry name" value="Nucleic acid-binding proteins"/>
    <property type="match status" value="1"/>
</dbReference>
<dbReference type="Gene3D" id="3.40.50.300">
    <property type="entry name" value="P-loop containing nucleotide triphosphate hydrolases"/>
    <property type="match status" value="1"/>
</dbReference>
<dbReference type="InterPro" id="IPR031327">
    <property type="entry name" value="MCM"/>
</dbReference>
<dbReference type="InterPro" id="IPR008048">
    <property type="entry name" value="MCM5"/>
</dbReference>
<dbReference type="InterPro" id="IPR054125">
    <property type="entry name" value="MCM5_C"/>
</dbReference>
<dbReference type="InterPro" id="IPR018525">
    <property type="entry name" value="MCM_CS"/>
</dbReference>
<dbReference type="InterPro" id="IPR001208">
    <property type="entry name" value="MCM_dom"/>
</dbReference>
<dbReference type="InterPro" id="IPR041562">
    <property type="entry name" value="MCM_lid"/>
</dbReference>
<dbReference type="InterPro" id="IPR027925">
    <property type="entry name" value="MCM_N"/>
</dbReference>
<dbReference type="InterPro" id="IPR033762">
    <property type="entry name" value="MCM_OB"/>
</dbReference>
<dbReference type="InterPro" id="IPR012340">
    <property type="entry name" value="NA-bd_OB-fold"/>
</dbReference>
<dbReference type="InterPro" id="IPR027417">
    <property type="entry name" value="P-loop_NTPase"/>
</dbReference>
<dbReference type="PANTHER" id="PTHR11630">
    <property type="entry name" value="DNA REPLICATION LICENSING FACTOR MCM FAMILY MEMBER"/>
    <property type="match status" value="1"/>
</dbReference>
<dbReference type="PANTHER" id="PTHR11630:SF42">
    <property type="entry name" value="DNA REPLICATION LICENSING FACTOR MCM5"/>
    <property type="match status" value="1"/>
</dbReference>
<dbReference type="Pfam" id="PF00493">
    <property type="entry name" value="MCM"/>
    <property type="match status" value="1"/>
</dbReference>
<dbReference type="Pfam" id="PF21933">
    <property type="entry name" value="MCM5_C"/>
    <property type="match status" value="1"/>
</dbReference>
<dbReference type="Pfam" id="PF17855">
    <property type="entry name" value="MCM_lid"/>
    <property type="match status" value="1"/>
</dbReference>
<dbReference type="Pfam" id="PF14551">
    <property type="entry name" value="MCM_N"/>
    <property type="match status" value="1"/>
</dbReference>
<dbReference type="Pfam" id="PF17207">
    <property type="entry name" value="MCM_OB"/>
    <property type="match status" value="1"/>
</dbReference>
<dbReference type="PRINTS" id="PR01657">
    <property type="entry name" value="MCMFAMILY"/>
</dbReference>
<dbReference type="PRINTS" id="PR01661">
    <property type="entry name" value="MCMPROTEIN5"/>
</dbReference>
<dbReference type="SMART" id="SM00350">
    <property type="entry name" value="MCM"/>
    <property type="match status" value="1"/>
</dbReference>
<dbReference type="SUPFAM" id="SSF50249">
    <property type="entry name" value="Nucleic acid-binding proteins"/>
    <property type="match status" value="1"/>
</dbReference>
<dbReference type="SUPFAM" id="SSF52540">
    <property type="entry name" value="P-loop containing nucleoside triphosphate hydrolases"/>
    <property type="match status" value="1"/>
</dbReference>
<dbReference type="PROSITE" id="PS00847">
    <property type="entry name" value="MCM_1"/>
    <property type="match status" value="1"/>
</dbReference>
<dbReference type="PROSITE" id="PS50051">
    <property type="entry name" value="MCM_2"/>
    <property type="match status" value="1"/>
</dbReference>
<feature type="chain" id="PRO_0000406422" description="DNA replication licensing factor Mcm5">
    <location>
        <begin position="1"/>
        <end position="733"/>
    </location>
</feature>
<feature type="domain" description="MCM">
    <location>
        <begin position="328"/>
        <end position="534"/>
    </location>
</feature>
<feature type="short sequence motif" description="Arginine finger">
    <location>
        <begin position="509"/>
        <end position="512"/>
    </location>
</feature>
<feature type="binding site" evidence="1">
    <location>
        <position position="368"/>
    </location>
    <ligand>
        <name>ADP</name>
        <dbReference type="ChEBI" id="CHEBI:456216"/>
        <note>ligand shared with MCM3</note>
    </ligand>
</feature>
<feature type="mutagenesis site" description="Greatly reduces complex helicase activity." evidence="3">
    <original>K</original>
    <variation>A</variation>
    <location>
        <position position="384"/>
    </location>
</feature>
<feature type="sequence conflict" description="In Ref. 2; AAC47652." evidence="4" ref="2">
    <original>A</original>
    <variation>V</variation>
    <location>
        <position position="302"/>
    </location>
</feature>
<feature type="sequence conflict" description="In Ref. 2; AAC47652." evidence="4" ref="2">
    <original>F</original>
    <variation>L</variation>
    <location>
        <position position="319"/>
    </location>
</feature>
<feature type="sequence conflict" description="In Ref. 2; AAC47652." evidence="4" ref="2">
    <original>G</original>
    <variation>V</variation>
    <location>
        <position position="357"/>
    </location>
</feature>
<feature type="sequence conflict" description="In Ref. 2; AAC47652." evidence="4" ref="2">
    <original>M</original>
    <variation>V</variation>
    <location>
        <position position="426"/>
    </location>
</feature>
<keyword id="KW-0002">3D-structure</keyword>
<keyword id="KW-0067">ATP-binding</keyword>
<keyword id="KW-0131">Cell cycle</keyword>
<keyword id="KW-0963">Cytoplasm</keyword>
<keyword id="KW-0235">DNA replication</keyword>
<keyword id="KW-0238">DNA-binding</keyword>
<keyword id="KW-0347">Helicase</keyword>
<keyword id="KW-0378">Hydrolase</keyword>
<keyword id="KW-0547">Nucleotide-binding</keyword>
<keyword id="KW-0539">Nucleus</keyword>
<keyword id="KW-1185">Reference proteome</keyword>
<reference key="1">
    <citation type="journal article" date="1997" name="Gene">
        <title>Cloning of Drosophila MCM homologs and analysis of their requirement during embryogenesis.</title>
        <authorList>
            <person name="Su T.T."/>
            <person name="Yakubovich N."/>
            <person name="O'Farrell P.H."/>
        </authorList>
    </citation>
    <scope>NUCLEOTIDE SEQUENCE [MRNA]</scope>
</reference>
<reference key="2">
    <citation type="journal article" date="2000" name="Science">
        <title>The genome sequence of Drosophila melanogaster.</title>
        <authorList>
            <person name="Adams M.D."/>
            <person name="Celniker S.E."/>
            <person name="Holt R.A."/>
            <person name="Evans C.A."/>
            <person name="Gocayne J.D."/>
            <person name="Amanatides P.G."/>
            <person name="Scherer S.E."/>
            <person name="Li P.W."/>
            <person name="Hoskins R.A."/>
            <person name="Galle R.F."/>
            <person name="George R.A."/>
            <person name="Lewis S.E."/>
            <person name="Richards S."/>
            <person name="Ashburner M."/>
            <person name="Henderson S.N."/>
            <person name="Sutton G.G."/>
            <person name="Wortman J.R."/>
            <person name="Yandell M.D."/>
            <person name="Zhang Q."/>
            <person name="Chen L.X."/>
            <person name="Brandon R.C."/>
            <person name="Rogers Y.-H.C."/>
            <person name="Blazej R.G."/>
            <person name="Champe M."/>
            <person name="Pfeiffer B.D."/>
            <person name="Wan K.H."/>
            <person name="Doyle C."/>
            <person name="Baxter E.G."/>
            <person name="Helt G."/>
            <person name="Nelson C.R."/>
            <person name="Miklos G.L.G."/>
            <person name="Abril J.F."/>
            <person name="Agbayani A."/>
            <person name="An H.-J."/>
            <person name="Andrews-Pfannkoch C."/>
            <person name="Baldwin D."/>
            <person name="Ballew R.M."/>
            <person name="Basu A."/>
            <person name="Baxendale J."/>
            <person name="Bayraktaroglu L."/>
            <person name="Beasley E.M."/>
            <person name="Beeson K.Y."/>
            <person name="Benos P.V."/>
            <person name="Berman B.P."/>
            <person name="Bhandari D."/>
            <person name="Bolshakov S."/>
            <person name="Borkova D."/>
            <person name="Botchan M.R."/>
            <person name="Bouck J."/>
            <person name="Brokstein P."/>
            <person name="Brottier P."/>
            <person name="Burtis K.C."/>
            <person name="Busam D.A."/>
            <person name="Butler H."/>
            <person name="Cadieu E."/>
            <person name="Center A."/>
            <person name="Chandra I."/>
            <person name="Cherry J.M."/>
            <person name="Cawley S."/>
            <person name="Dahlke C."/>
            <person name="Davenport L.B."/>
            <person name="Davies P."/>
            <person name="de Pablos B."/>
            <person name="Delcher A."/>
            <person name="Deng Z."/>
            <person name="Mays A.D."/>
            <person name="Dew I."/>
            <person name="Dietz S.M."/>
            <person name="Dodson K."/>
            <person name="Doup L.E."/>
            <person name="Downes M."/>
            <person name="Dugan-Rocha S."/>
            <person name="Dunkov B.C."/>
            <person name="Dunn P."/>
            <person name="Durbin K.J."/>
            <person name="Evangelista C.C."/>
            <person name="Ferraz C."/>
            <person name="Ferriera S."/>
            <person name="Fleischmann W."/>
            <person name="Fosler C."/>
            <person name="Gabrielian A.E."/>
            <person name="Garg N.S."/>
            <person name="Gelbart W.M."/>
            <person name="Glasser K."/>
            <person name="Glodek A."/>
            <person name="Gong F."/>
            <person name="Gorrell J.H."/>
            <person name="Gu Z."/>
            <person name="Guan P."/>
            <person name="Harris M."/>
            <person name="Harris N.L."/>
            <person name="Harvey D.A."/>
            <person name="Heiman T.J."/>
            <person name="Hernandez J.R."/>
            <person name="Houck J."/>
            <person name="Hostin D."/>
            <person name="Houston K.A."/>
            <person name="Howland T.J."/>
            <person name="Wei M.-H."/>
            <person name="Ibegwam C."/>
            <person name="Jalali M."/>
            <person name="Kalush F."/>
            <person name="Karpen G.H."/>
            <person name="Ke Z."/>
            <person name="Kennison J.A."/>
            <person name="Ketchum K.A."/>
            <person name="Kimmel B.E."/>
            <person name="Kodira C.D."/>
            <person name="Kraft C.L."/>
            <person name="Kravitz S."/>
            <person name="Kulp D."/>
            <person name="Lai Z."/>
            <person name="Lasko P."/>
            <person name="Lei Y."/>
            <person name="Levitsky A.A."/>
            <person name="Li J.H."/>
            <person name="Li Z."/>
            <person name="Liang Y."/>
            <person name="Lin X."/>
            <person name="Liu X."/>
            <person name="Mattei B."/>
            <person name="McIntosh T.C."/>
            <person name="McLeod M.P."/>
            <person name="McPherson D."/>
            <person name="Merkulov G."/>
            <person name="Milshina N.V."/>
            <person name="Mobarry C."/>
            <person name="Morris J."/>
            <person name="Moshrefi A."/>
            <person name="Mount S.M."/>
            <person name="Moy M."/>
            <person name="Murphy B."/>
            <person name="Murphy L."/>
            <person name="Muzny D.M."/>
            <person name="Nelson D.L."/>
            <person name="Nelson D.R."/>
            <person name="Nelson K.A."/>
            <person name="Nixon K."/>
            <person name="Nusskern D.R."/>
            <person name="Pacleb J.M."/>
            <person name="Palazzolo M."/>
            <person name="Pittman G.S."/>
            <person name="Pan S."/>
            <person name="Pollard J."/>
            <person name="Puri V."/>
            <person name="Reese M.G."/>
            <person name="Reinert K."/>
            <person name="Remington K."/>
            <person name="Saunders R.D.C."/>
            <person name="Scheeler F."/>
            <person name="Shen H."/>
            <person name="Shue B.C."/>
            <person name="Siden-Kiamos I."/>
            <person name="Simpson M."/>
            <person name="Skupski M.P."/>
            <person name="Smith T.J."/>
            <person name="Spier E."/>
            <person name="Spradling A.C."/>
            <person name="Stapleton M."/>
            <person name="Strong R."/>
            <person name="Sun E."/>
            <person name="Svirskas R."/>
            <person name="Tector C."/>
            <person name="Turner R."/>
            <person name="Venter E."/>
            <person name="Wang A.H."/>
            <person name="Wang X."/>
            <person name="Wang Z.-Y."/>
            <person name="Wassarman D.A."/>
            <person name="Weinstock G.M."/>
            <person name="Weissenbach J."/>
            <person name="Williams S.M."/>
            <person name="Woodage T."/>
            <person name="Worley K.C."/>
            <person name="Wu D."/>
            <person name="Yang S."/>
            <person name="Yao Q.A."/>
            <person name="Ye J."/>
            <person name="Yeh R.-F."/>
            <person name="Zaveri J.S."/>
            <person name="Zhan M."/>
            <person name="Zhang G."/>
            <person name="Zhao Q."/>
            <person name="Zheng L."/>
            <person name="Zheng X.H."/>
            <person name="Zhong F.N."/>
            <person name="Zhong W."/>
            <person name="Zhou X."/>
            <person name="Zhu S.C."/>
            <person name="Zhu X."/>
            <person name="Smith H.O."/>
            <person name="Gibbs R.A."/>
            <person name="Myers E.W."/>
            <person name="Rubin G.M."/>
            <person name="Venter J.C."/>
        </authorList>
    </citation>
    <scope>NUCLEOTIDE SEQUENCE [LARGE SCALE GENOMIC DNA]</scope>
    <source>
        <strain>Berkeley</strain>
    </source>
</reference>
<reference key="3">
    <citation type="journal article" date="2002" name="Genome Biol.">
        <title>Annotation of the Drosophila melanogaster euchromatic genome: a systematic review.</title>
        <authorList>
            <person name="Misra S."/>
            <person name="Crosby M.A."/>
            <person name="Mungall C.J."/>
            <person name="Matthews B.B."/>
            <person name="Campbell K.S."/>
            <person name="Hradecky P."/>
            <person name="Huang Y."/>
            <person name="Kaminker J.S."/>
            <person name="Millburn G.H."/>
            <person name="Prochnik S.E."/>
            <person name="Smith C.D."/>
            <person name="Tupy J.L."/>
            <person name="Whitfield E.J."/>
            <person name="Bayraktaroglu L."/>
            <person name="Berman B.P."/>
            <person name="Bettencourt B.R."/>
            <person name="Celniker S.E."/>
            <person name="de Grey A.D.N.J."/>
            <person name="Drysdale R.A."/>
            <person name="Harris N.L."/>
            <person name="Richter J."/>
            <person name="Russo S."/>
            <person name="Schroeder A.J."/>
            <person name="Shu S.Q."/>
            <person name="Stapleton M."/>
            <person name="Yamada C."/>
            <person name="Ashburner M."/>
            <person name="Gelbart W.M."/>
            <person name="Rubin G.M."/>
            <person name="Lewis S.E."/>
        </authorList>
    </citation>
    <scope>GENOME REANNOTATION</scope>
    <source>
        <strain>Berkeley</strain>
    </source>
</reference>
<reference key="4">
    <citation type="submission" date="2001-12" db="EMBL/GenBank/DDBJ databases">
        <authorList>
            <person name="Stapleton M."/>
            <person name="Brokstein P."/>
            <person name="Hong L."/>
            <person name="Agbayani A."/>
            <person name="Carlson J."/>
            <person name="Champe M."/>
            <person name="Chavez C."/>
            <person name="Dorsett V."/>
            <person name="Dresnek D."/>
            <person name="Farfan D."/>
            <person name="Frise E."/>
            <person name="George R."/>
            <person name="Gonzalez M."/>
            <person name="Guarin H."/>
            <person name="Kronmiller B."/>
            <person name="Li P."/>
            <person name="Liao G."/>
            <person name="Miranda A."/>
            <person name="Mungall C.J."/>
            <person name="Nunoo J."/>
            <person name="Pacleb J."/>
            <person name="Paragas V."/>
            <person name="Park S."/>
            <person name="Patel S."/>
            <person name="Phouanenavong S."/>
            <person name="Wan K."/>
            <person name="Yu C."/>
            <person name="Lewis S.E."/>
            <person name="Rubin G.M."/>
            <person name="Celniker S."/>
        </authorList>
    </citation>
    <scope>NUCLEOTIDE SEQUENCE [LARGE SCALE MRNA]</scope>
    <source>
        <strain>Berkeley</strain>
    </source>
</reference>
<reference key="5">
    <citation type="journal article" date="2006" name="Proc. Natl. Acad. Sci. U.S.A.">
        <title>Isolation of the Cdc45/Mcm2-7/GINS (CMG) complex, a candidate for the eukaryotic DNA replication fork helicase.</title>
        <authorList>
            <person name="Moyer S.E."/>
            <person name="Lewis P.W."/>
            <person name="Botchan M.R."/>
        </authorList>
    </citation>
    <scope>IDENTIFICATION IN THE MCM2-7 COMPLEX</scope>
    <scope>FUNCTION OF THE MCM2-7 COMPLEX</scope>
</reference>
<reference key="6">
    <citation type="journal article" date="2010" name="Mol. Cell">
        <title>Activation of the MCM2-7 helicase by association with Cdc45 and GINS proteins.</title>
        <authorList>
            <person name="Ilves I."/>
            <person name="Petojevic T."/>
            <person name="Pesavento J.J."/>
            <person name="Botchan M.R."/>
        </authorList>
    </citation>
    <scope>RECONSTITUTION OF THE MCM2-7 COMPLEX</scope>
    <scope>FUNCTION OF THE MCM2-7 COMPLEX</scope>
    <scope>MUTAGENESIS OF LYS-384</scope>
</reference>
<proteinExistence type="evidence at protein level"/>
<evidence type="ECO:0000250" key="1">
    <source>
        <dbReference type="UniProtKB" id="P33992"/>
    </source>
</evidence>
<evidence type="ECO:0000269" key="2">
    <source>
    </source>
</evidence>
<evidence type="ECO:0000269" key="3">
    <source>
    </source>
</evidence>
<evidence type="ECO:0000305" key="4"/>
<comment type="function">
    <text evidence="2 3">Acts as a component of the Mcm2-7 complex (Mcm complex) which is the putative replicative helicase essential for 'once per cell cycle' DNA replication initiation and elongation in eukaryotic cells. Core component of CDC45-MCM-GINS (CMG) helicase, the molecular machine that unwinds template DNA during replication, and around which the replisome is built. The active ATPase sites in the Mcm2-7 ring are formed through the interaction surfaces of two neighboring subunits such that a critical structure of a conserved arginine finger motif is provided in trans relative to the ATP-binding site of the Walker A box of the adjacent subunit. The six ATPase active sites, however, are likely to contribute differentially to the complex helicase activity.</text>
</comment>
<comment type="catalytic activity">
    <reaction evidence="1">
        <text>ATP + H2O = ADP + phosphate + H(+)</text>
        <dbReference type="Rhea" id="RHEA:13065"/>
        <dbReference type="ChEBI" id="CHEBI:15377"/>
        <dbReference type="ChEBI" id="CHEBI:15378"/>
        <dbReference type="ChEBI" id="CHEBI:30616"/>
        <dbReference type="ChEBI" id="CHEBI:43474"/>
        <dbReference type="ChEBI" id="CHEBI:456216"/>
        <dbReference type="EC" id="3.6.4.12"/>
    </reaction>
    <physiologicalReaction direction="left-to-right" evidence="1">
        <dbReference type="Rhea" id="RHEA:13066"/>
    </physiologicalReaction>
</comment>
<comment type="subunit">
    <text evidence="2 4">Component of the Mcm2-7 complex. The complex forms a toroidal hexameric ring with the proposed subunit order Mcm2-Mcm6-Mcm4-Mcm7-Mcm3-Mcm5 (Probable).</text>
</comment>
<comment type="interaction">
    <interactant intactId="EBI-83298">
        <id>Q9VGW6</id>
    </interactant>
    <interactant intactId="EBI-138228">
        <id>P49735</id>
        <label>Mcm2</label>
    </interactant>
    <organismsDiffer>false</organismsDiffer>
    <experiments>9</experiments>
</comment>
<comment type="interaction">
    <interactant intactId="EBI-83298">
        <id>Q9VGW6</id>
    </interactant>
    <interactant intactId="EBI-103930">
        <id>Q9XYU1</id>
        <label>Mcm3</label>
    </interactant>
    <organismsDiffer>false</organismsDiffer>
    <experiments>8</experiments>
</comment>
<comment type="subcellular location">
    <subcellularLocation>
        <location evidence="1">Nucleus</location>
    </subcellularLocation>
    <subcellularLocation>
        <location evidence="1">Cytoplasm</location>
        <location evidence="1">Cytosol</location>
    </subcellularLocation>
</comment>
<comment type="similarity">
    <text evidence="4">Belongs to the MCM family.</text>
</comment>
<comment type="sequence caution" evidence="4">
    <conflict type="frameshift">
        <sequence resource="EMBL-CDS" id="AAC47652"/>
    </conflict>
</comment>
<accession>Q9VGW6</accession>
<accession>P91676</accession>
<gene>
    <name type="primary">Mcm5</name>
    <name type="ORF">CG4082</name>
</gene>
<organism>
    <name type="scientific">Drosophila melanogaster</name>
    <name type="common">Fruit fly</name>
    <dbReference type="NCBI Taxonomy" id="7227"/>
    <lineage>
        <taxon>Eukaryota</taxon>
        <taxon>Metazoa</taxon>
        <taxon>Ecdysozoa</taxon>
        <taxon>Arthropoda</taxon>
        <taxon>Hexapoda</taxon>
        <taxon>Insecta</taxon>
        <taxon>Pterygota</taxon>
        <taxon>Neoptera</taxon>
        <taxon>Endopterygota</taxon>
        <taxon>Diptera</taxon>
        <taxon>Brachycera</taxon>
        <taxon>Muscomorpha</taxon>
        <taxon>Ephydroidea</taxon>
        <taxon>Drosophilidae</taxon>
        <taxon>Drosophila</taxon>
        <taxon>Sophophora</taxon>
    </lineage>
</organism>
<name>MCM5_DROME</name>